<comment type="function">
    <text evidence="1">Involved in maceration and soft-rotting of plant tissue. Hydrolyzes the 1,4-alpha glycosidic bonds of de-esterified pectate in the smooth region of the plant cell wall (By similarity).</text>
</comment>
<comment type="catalytic activity">
    <reaction>
        <text>(1,4-alpha-D-galacturonosyl)n+m + H2O = (1,4-alpha-D-galacturonosyl)n + (1,4-alpha-D-galacturonosyl)m.</text>
        <dbReference type="EC" id="3.2.1.15"/>
    </reaction>
</comment>
<comment type="subcellular location">
    <subcellularLocation>
        <location evidence="1">Secreted</location>
    </subcellularLocation>
</comment>
<comment type="similarity">
    <text evidence="4">Belongs to the glycosyl hydrolase 28 family.</text>
</comment>
<reference key="1">
    <citation type="journal article" date="2005" name="Nature">
        <title>Genomic sequence of the pathogenic and allergenic filamentous fungus Aspergillus fumigatus.</title>
        <authorList>
            <person name="Nierman W.C."/>
            <person name="Pain A."/>
            <person name="Anderson M.J."/>
            <person name="Wortman J.R."/>
            <person name="Kim H.S."/>
            <person name="Arroyo J."/>
            <person name="Berriman M."/>
            <person name="Abe K."/>
            <person name="Archer D.B."/>
            <person name="Bermejo C."/>
            <person name="Bennett J.W."/>
            <person name="Bowyer P."/>
            <person name="Chen D."/>
            <person name="Collins M."/>
            <person name="Coulsen R."/>
            <person name="Davies R."/>
            <person name="Dyer P.S."/>
            <person name="Farman M.L."/>
            <person name="Fedorova N."/>
            <person name="Fedorova N.D."/>
            <person name="Feldblyum T.V."/>
            <person name="Fischer R."/>
            <person name="Fosker N."/>
            <person name="Fraser A."/>
            <person name="Garcia J.L."/>
            <person name="Garcia M.J."/>
            <person name="Goble A."/>
            <person name="Goldman G.H."/>
            <person name="Gomi K."/>
            <person name="Griffith-Jones S."/>
            <person name="Gwilliam R."/>
            <person name="Haas B.J."/>
            <person name="Haas H."/>
            <person name="Harris D.E."/>
            <person name="Horiuchi H."/>
            <person name="Huang J."/>
            <person name="Humphray S."/>
            <person name="Jimenez J."/>
            <person name="Keller N."/>
            <person name="Khouri H."/>
            <person name="Kitamoto K."/>
            <person name="Kobayashi T."/>
            <person name="Konzack S."/>
            <person name="Kulkarni R."/>
            <person name="Kumagai T."/>
            <person name="Lafton A."/>
            <person name="Latge J.-P."/>
            <person name="Li W."/>
            <person name="Lord A."/>
            <person name="Lu C."/>
            <person name="Majoros W.H."/>
            <person name="May G.S."/>
            <person name="Miller B.L."/>
            <person name="Mohamoud Y."/>
            <person name="Molina M."/>
            <person name="Monod M."/>
            <person name="Mouyna I."/>
            <person name="Mulligan S."/>
            <person name="Murphy L.D."/>
            <person name="O'Neil S."/>
            <person name="Paulsen I."/>
            <person name="Penalva M.A."/>
            <person name="Pertea M."/>
            <person name="Price C."/>
            <person name="Pritchard B.L."/>
            <person name="Quail M.A."/>
            <person name="Rabbinowitsch E."/>
            <person name="Rawlins N."/>
            <person name="Rajandream M.A."/>
            <person name="Reichard U."/>
            <person name="Renauld H."/>
            <person name="Robson G.D."/>
            <person name="Rodriguez de Cordoba S."/>
            <person name="Rodriguez-Pena J.M."/>
            <person name="Ronning C.M."/>
            <person name="Rutter S."/>
            <person name="Salzberg S.L."/>
            <person name="Sanchez M."/>
            <person name="Sanchez-Ferrero J.C."/>
            <person name="Saunders D."/>
            <person name="Seeger K."/>
            <person name="Squares R."/>
            <person name="Squares S."/>
            <person name="Takeuchi M."/>
            <person name="Tekaia F."/>
            <person name="Turner G."/>
            <person name="Vazquez de Aldana C.R."/>
            <person name="Weidman J."/>
            <person name="White O."/>
            <person name="Woodward J.R."/>
            <person name="Yu J.-H."/>
            <person name="Fraser C.M."/>
            <person name="Galagan J.E."/>
            <person name="Asai K."/>
            <person name="Machida M."/>
            <person name="Hall N."/>
            <person name="Barrell B.G."/>
            <person name="Denning D.W."/>
        </authorList>
    </citation>
    <scope>NUCLEOTIDE SEQUENCE [LARGE SCALE GENOMIC DNA]</scope>
    <source>
        <strain>ATCC MYA-4609 / CBS 101355 / FGSC A1100 / Af293</strain>
    </source>
</reference>
<name>PGLR_ASPFU</name>
<feature type="signal peptide" evidence="2">
    <location>
        <begin position="1"/>
        <end position="19"/>
    </location>
</feature>
<feature type="propeptide" id="PRO_0000393692" evidence="2">
    <location>
        <begin position="20"/>
        <end position="35"/>
    </location>
</feature>
<feature type="chain" id="PRO_0000393693" description="Probable endopolygalacturonase AFUA_1G17220">
    <location>
        <begin position="36"/>
        <end position="378"/>
    </location>
</feature>
<feature type="repeat" description="PbH1 1">
    <location>
        <begin position="147"/>
        <end position="169"/>
    </location>
</feature>
<feature type="repeat" description="PbH1 2">
    <location>
        <begin position="170"/>
        <end position="200"/>
    </location>
</feature>
<feature type="repeat" description="PbH1 3">
    <location>
        <begin position="201"/>
        <end position="222"/>
    </location>
</feature>
<feature type="repeat" description="PbH1 4">
    <location>
        <begin position="252"/>
        <end position="273"/>
    </location>
</feature>
<feature type="repeat" description="PbH1 5">
    <location>
        <begin position="281"/>
        <end position="303"/>
    </location>
</feature>
<feature type="active site" description="Proton donor" evidence="3">
    <location>
        <position position="215"/>
    </location>
</feature>
<feature type="active site" evidence="3">
    <location>
        <position position="237"/>
    </location>
</feature>
<feature type="glycosylation site" description="N-linked (GlcNAc...) asparagine" evidence="2">
    <location>
        <position position="254"/>
    </location>
</feature>
<feature type="glycosylation site" description="N-linked (GlcNAc...) asparagine" evidence="2">
    <location>
        <position position="327"/>
    </location>
</feature>
<feature type="glycosylation site" description="N-linked (GlcNAc...) asparagine" evidence="2">
    <location>
        <position position="352"/>
    </location>
</feature>
<feature type="disulfide bond" evidence="1">
    <location>
        <begin position="38"/>
        <end position="56"/>
    </location>
</feature>
<feature type="disulfide bond" evidence="1">
    <location>
        <begin position="217"/>
        <end position="233"/>
    </location>
</feature>
<feature type="disulfide bond" evidence="1">
    <location>
        <begin position="345"/>
        <end position="350"/>
    </location>
</feature>
<feature type="disulfide bond" evidence="1">
    <location>
        <begin position="369"/>
        <end position="378"/>
    </location>
</feature>
<sequence length="378" mass="38425">MLKLMGSLVLLASAAEVIASPAAEPVAPSTTLEKRAPCTFSGSNGAAAAMASQKACSTIVLSNVAVPAGTTLDLSDLADGTTVTFEGETTWGYQEWSGPLLKISGKNIKVKGASGATLNPDGARWWDGQGGNGGKTKPKFFAAHDLTSSSSITDLHILNTPVQAVSINGCDGLTITDITIDNSAGDTQGGHNTDAFDIGSSSNIIISGAKVYNQDDCVAVNSGTDITFTGGLCSGGHGLSIGSVGGRSDNTVENVSFTNSQVTNSDNGLRIKATKGKTGTIKGVTYSGITLSSIRKYGILIEQNYDGGDLKGDPTSGIPITDLTMQNISGKGAVASSGYNIAIVCGSGACSNWTWKSVEVTGGKTYGSCKNVPSVAQC</sequence>
<dbReference type="EC" id="3.2.1.15"/>
<dbReference type="EMBL" id="AAHF01000004">
    <property type="protein sequence ID" value="EAL91052.1"/>
    <property type="molecule type" value="Genomic_DNA"/>
</dbReference>
<dbReference type="RefSeq" id="XP_753090.1">
    <property type="nucleotide sequence ID" value="XM_747997.1"/>
</dbReference>
<dbReference type="SMR" id="Q4WR80"/>
<dbReference type="FunCoup" id="Q4WR80">
    <property type="interactions" value="127"/>
</dbReference>
<dbReference type="STRING" id="330879.Q4WR80"/>
<dbReference type="EnsemblFungi" id="EAL91052">
    <property type="protein sequence ID" value="EAL91052"/>
    <property type="gene ID" value="AFUA_1G17220"/>
</dbReference>
<dbReference type="GeneID" id="3510122"/>
<dbReference type="KEGG" id="afm:AFUA_1G17220"/>
<dbReference type="VEuPathDB" id="FungiDB:Afu1g17220"/>
<dbReference type="eggNOG" id="ENOG502SHAF">
    <property type="taxonomic scope" value="Eukaryota"/>
</dbReference>
<dbReference type="HOGENOM" id="CLU_040116_0_0_1"/>
<dbReference type="InParanoid" id="Q4WR80"/>
<dbReference type="OMA" id="GYCHGGH"/>
<dbReference type="OrthoDB" id="1546079at2759"/>
<dbReference type="Proteomes" id="UP000002530">
    <property type="component" value="Chromosome 1"/>
</dbReference>
<dbReference type="GO" id="GO:0005576">
    <property type="term" value="C:extracellular region"/>
    <property type="evidence" value="ECO:0000250"/>
    <property type="project" value="UniProtKB"/>
</dbReference>
<dbReference type="GO" id="GO:0004650">
    <property type="term" value="F:polygalacturonase activity"/>
    <property type="evidence" value="ECO:0000250"/>
    <property type="project" value="UniProtKB"/>
</dbReference>
<dbReference type="GO" id="GO:0071555">
    <property type="term" value="P:cell wall organization"/>
    <property type="evidence" value="ECO:0007669"/>
    <property type="project" value="UniProtKB-KW"/>
</dbReference>
<dbReference type="GO" id="GO:0045490">
    <property type="term" value="P:pectin catabolic process"/>
    <property type="evidence" value="ECO:0000250"/>
    <property type="project" value="UniProtKB"/>
</dbReference>
<dbReference type="FunFam" id="2.160.20.10:FF:000002">
    <property type="entry name" value="Endopolygalacturonase D"/>
    <property type="match status" value="1"/>
</dbReference>
<dbReference type="Gene3D" id="2.160.20.10">
    <property type="entry name" value="Single-stranded right-handed beta-helix, Pectin lyase-like"/>
    <property type="match status" value="1"/>
</dbReference>
<dbReference type="InterPro" id="IPR000743">
    <property type="entry name" value="Glyco_hydro_28"/>
</dbReference>
<dbReference type="InterPro" id="IPR050434">
    <property type="entry name" value="Glycosyl_hydrlase_28"/>
</dbReference>
<dbReference type="InterPro" id="IPR006626">
    <property type="entry name" value="PbH1"/>
</dbReference>
<dbReference type="InterPro" id="IPR012334">
    <property type="entry name" value="Pectin_lyas_fold"/>
</dbReference>
<dbReference type="InterPro" id="IPR011050">
    <property type="entry name" value="Pectin_lyase_fold/virulence"/>
</dbReference>
<dbReference type="PANTHER" id="PTHR31884">
    <property type="entry name" value="POLYGALACTURONASE"/>
    <property type="match status" value="1"/>
</dbReference>
<dbReference type="PANTHER" id="PTHR31884:SF1">
    <property type="entry name" value="POLYGALACTURONASE"/>
    <property type="match status" value="1"/>
</dbReference>
<dbReference type="Pfam" id="PF00295">
    <property type="entry name" value="Glyco_hydro_28"/>
    <property type="match status" value="1"/>
</dbReference>
<dbReference type="SMART" id="SM00710">
    <property type="entry name" value="PbH1"/>
    <property type="match status" value="5"/>
</dbReference>
<dbReference type="SUPFAM" id="SSF51126">
    <property type="entry name" value="Pectin lyase-like"/>
    <property type="match status" value="1"/>
</dbReference>
<dbReference type="PROSITE" id="PS00502">
    <property type="entry name" value="POLYGALACTURONASE"/>
    <property type="match status" value="1"/>
</dbReference>
<accession>Q4WR80</accession>
<organism>
    <name type="scientific">Aspergillus fumigatus (strain ATCC MYA-4609 / CBS 101355 / FGSC A1100 / Af293)</name>
    <name type="common">Neosartorya fumigata</name>
    <dbReference type="NCBI Taxonomy" id="330879"/>
    <lineage>
        <taxon>Eukaryota</taxon>
        <taxon>Fungi</taxon>
        <taxon>Dikarya</taxon>
        <taxon>Ascomycota</taxon>
        <taxon>Pezizomycotina</taxon>
        <taxon>Eurotiomycetes</taxon>
        <taxon>Eurotiomycetidae</taxon>
        <taxon>Eurotiales</taxon>
        <taxon>Aspergillaceae</taxon>
        <taxon>Aspergillus</taxon>
        <taxon>Aspergillus subgen. Fumigati</taxon>
    </lineage>
</organism>
<gene>
    <name type="ORF">AFUA_1G17220</name>
</gene>
<proteinExistence type="inferred from homology"/>
<keyword id="KW-0961">Cell wall biogenesis/degradation</keyword>
<keyword id="KW-1015">Disulfide bond</keyword>
<keyword id="KW-0325">Glycoprotein</keyword>
<keyword id="KW-0326">Glycosidase</keyword>
<keyword id="KW-0378">Hydrolase</keyword>
<keyword id="KW-1185">Reference proteome</keyword>
<keyword id="KW-0677">Repeat</keyword>
<keyword id="KW-0964">Secreted</keyword>
<keyword id="KW-0732">Signal</keyword>
<keyword id="KW-0865">Zymogen</keyword>
<protein>
    <recommendedName>
        <fullName>Probable endopolygalacturonase AFUA_1G17220</fullName>
        <ecNumber>3.2.1.15</ecNumber>
    </recommendedName>
    <alternativeName>
        <fullName>Pectinase AFUA_1G17220</fullName>
    </alternativeName>
    <alternativeName>
        <fullName>Polygalacturonase AFUA_1G17220</fullName>
    </alternativeName>
</protein>
<evidence type="ECO:0000250" key="1"/>
<evidence type="ECO:0000255" key="2"/>
<evidence type="ECO:0000255" key="3">
    <source>
        <dbReference type="PROSITE-ProRule" id="PRU10052"/>
    </source>
</evidence>
<evidence type="ECO:0000305" key="4"/>